<gene>
    <name evidence="1" type="primary">obg</name>
    <name type="ordered locus">CJE0091</name>
</gene>
<proteinExistence type="inferred from homology"/>
<name>OBG_CAMJR</name>
<organism>
    <name type="scientific">Campylobacter jejuni (strain RM1221)</name>
    <dbReference type="NCBI Taxonomy" id="195099"/>
    <lineage>
        <taxon>Bacteria</taxon>
        <taxon>Pseudomonadati</taxon>
        <taxon>Campylobacterota</taxon>
        <taxon>Epsilonproteobacteria</taxon>
        <taxon>Campylobacterales</taxon>
        <taxon>Campylobacteraceae</taxon>
        <taxon>Campylobacter</taxon>
    </lineage>
</organism>
<reference key="1">
    <citation type="journal article" date="2005" name="PLoS Biol.">
        <title>Major structural differences and novel potential virulence mechanisms from the genomes of multiple Campylobacter species.</title>
        <authorList>
            <person name="Fouts D.E."/>
            <person name="Mongodin E.F."/>
            <person name="Mandrell R.E."/>
            <person name="Miller W.G."/>
            <person name="Rasko D.A."/>
            <person name="Ravel J."/>
            <person name="Brinkac L.M."/>
            <person name="DeBoy R.T."/>
            <person name="Parker C.T."/>
            <person name="Daugherty S.C."/>
            <person name="Dodson R.J."/>
            <person name="Durkin A.S."/>
            <person name="Madupu R."/>
            <person name="Sullivan S.A."/>
            <person name="Shetty J.U."/>
            <person name="Ayodeji M.A."/>
            <person name="Shvartsbeyn A."/>
            <person name="Schatz M.C."/>
            <person name="Badger J.H."/>
            <person name="Fraser C.M."/>
            <person name="Nelson K.E."/>
        </authorList>
    </citation>
    <scope>NUCLEOTIDE SEQUENCE [LARGE SCALE GENOMIC DNA]</scope>
    <source>
        <strain>RM1221</strain>
    </source>
</reference>
<sequence length="350" mass="38412">MFIDSVKITLASGDGGKGAVSFRREKHVPLGGPDGGDGGNGGDIIFVCDNNTHTLVNFKGKRELRAQNGAGGMGRNKNGKKGENLELIVPEGTQVIDVQTNEILLDLTKEGQRELFLKGGKGGLGNTHFKHATNQRPDYAQPGIKGESRLVRLELKLIADVGLVGFPNVGKSTLISVVSNAKPEIANYEFTTLTPKLGLVDVDEYNSFVMADIPGIIEGASGGKGLGLAFLKHIERTSFLLFVLDPMRQMPLKEQFIVLRKELEKFSNELFGRKFGIMISKSDSVRLGEEFAEQIALNINELDNYLKEINNPQSFLIKVSSLEKTGLKELKFMLLEEIKTLRNNKKILTI</sequence>
<keyword id="KW-0963">Cytoplasm</keyword>
<keyword id="KW-0342">GTP-binding</keyword>
<keyword id="KW-0378">Hydrolase</keyword>
<keyword id="KW-0460">Magnesium</keyword>
<keyword id="KW-0479">Metal-binding</keyword>
<keyword id="KW-0547">Nucleotide-binding</keyword>
<accession>Q5HX70</accession>
<dbReference type="EC" id="3.6.5.-" evidence="1"/>
<dbReference type="EMBL" id="CP000025">
    <property type="protein sequence ID" value="AAW34686.1"/>
    <property type="molecule type" value="Genomic_DNA"/>
</dbReference>
<dbReference type="SMR" id="Q5HX70"/>
<dbReference type="KEGG" id="cjr:CJE0091"/>
<dbReference type="HOGENOM" id="CLU_011747_2_0_7"/>
<dbReference type="GO" id="GO:0005737">
    <property type="term" value="C:cytoplasm"/>
    <property type="evidence" value="ECO:0007669"/>
    <property type="project" value="UniProtKB-SubCell"/>
</dbReference>
<dbReference type="GO" id="GO:0005525">
    <property type="term" value="F:GTP binding"/>
    <property type="evidence" value="ECO:0007669"/>
    <property type="project" value="UniProtKB-UniRule"/>
</dbReference>
<dbReference type="GO" id="GO:0003924">
    <property type="term" value="F:GTPase activity"/>
    <property type="evidence" value="ECO:0007669"/>
    <property type="project" value="UniProtKB-UniRule"/>
</dbReference>
<dbReference type="GO" id="GO:0000287">
    <property type="term" value="F:magnesium ion binding"/>
    <property type="evidence" value="ECO:0007669"/>
    <property type="project" value="InterPro"/>
</dbReference>
<dbReference type="GO" id="GO:0042254">
    <property type="term" value="P:ribosome biogenesis"/>
    <property type="evidence" value="ECO:0007669"/>
    <property type="project" value="UniProtKB-UniRule"/>
</dbReference>
<dbReference type="CDD" id="cd01898">
    <property type="entry name" value="Obg"/>
    <property type="match status" value="1"/>
</dbReference>
<dbReference type="FunFam" id="2.70.210.12:FF:000001">
    <property type="entry name" value="GTPase Obg"/>
    <property type="match status" value="1"/>
</dbReference>
<dbReference type="Gene3D" id="2.70.210.12">
    <property type="entry name" value="GTP1/OBG domain"/>
    <property type="match status" value="1"/>
</dbReference>
<dbReference type="Gene3D" id="3.40.50.300">
    <property type="entry name" value="P-loop containing nucleotide triphosphate hydrolases"/>
    <property type="match status" value="1"/>
</dbReference>
<dbReference type="HAMAP" id="MF_01454">
    <property type="entry name" value="GTPase_Obg"/>
    <property type="match status" value="1"/>
</dbReference>
<dbReference type="InterPro" id="IPR031167">
    <property type="entry name" value="G_OBG"/>
</dbReference>
<dbReference type="InterPro" id="IPR006073">
    <property type="entry name" value="GTP-bd"/>
</dbReference>
<dbReference type="InterPro" id="IPR014100">
    <property type="entry name" value="GTP-bd_Obg/CgtA"/>
</dbReference>
<dbReference type="InterPro" id="IPR006074">
    <property type="entry name" value="GTP1-OBG_CS"/>
</dbReference>
<dbReference type="InterPro" id="IPR006169">
    <property type="entry name" value="GTP1_OBG_dom"/>
</dbReference>
<dbReference type="InterPro" id="IPR036726">
    <property type="entry name" value="GTP1_OBG_dom_sf"/>
</dbReference>
<dbReference type="InterPro" id="IPR045086">
    <property type="entry name" value="OBG_GTPase"/>
</dbReference>
<dbReference type="InterPro" id="IPR027417">
    <property type="entry name" value="P-loop_NTPase"/>
</dbReference>
<dbReference type="NCBIfam" id="TIGR02729">
    <property type="entry name" value="Obg_CgtA"/>
    <property type="match status" value="1"/>
</dbReference>
<dbReference type="NCBIfam" id="NF008955">
    <property type="entry name" value="PRK12297.1"/>
    <property type="match status" value="1"/>
</dbReference>
<dbReference type="NCBIfam" id="NF008956">
    <property type="entry name" value="PRK12299.1"/>
    <property type="match status" value="1"/>
</dbReference>
<dbReference type="PANTHER" id="PTHR11702">
    <property type="entry name" value="DEVELOPMENTALLY REGULATED GTP-BINDING PROTEIN-RELATED"/>
    <property type="match status" value="1"/>
</dbReference>
<dbReference type="PANTHER" id="PTHR11702:SF31">
    <property type="entry name" value="MITOCHONDRIAL RIBOSOME-ASSOCIATED GTPASE 2"/>
    <property type="match status" value="1"/>
</dbReference>
<dbReference type="Pfam" id="PF01018">
    <property type="entry name" value="GTP1_OBG"/>
    <property type="match status" value="1"/>
</dbReference>
<dbReference type="Pfam" id="PF01926">
    <property type="entry name" value="MMR_HSR1"/>
    <property type="match status" value="1"/>
</dbReference>
<dbReference type="PIRSF" id="PIRSF002401">
    <property type="entry name" value="GTP_bd_Obg/CgtA"/>
    <property type="match status" value="1"/>
</dbReference>
<dbReference type="PRINTS" id="PR00326">
    <property type="entry name" value="GTP1OBG"/>
</dbReference>
<dbReference type="SUPFAM" id="SSF82051">
    <property type="entry name" value="Obg GTP-binding protein N-terminal domain"/>
    <property type="match status" value="1"/>
</dbReference>
<dbReference type="SUPFAM" id="SSF52540">
    <property type="entry name" value="P-loop containing nucleoside triphosphate hydrolases"/>
    <property type="match status" value="1"/>
</dbReference>
<dbReference type="PROSITE" id="PS51710">
    <property type="entry name" value="G_OBG"/>
    <property type="match status" value="1"/>
</dbReference>
<dbReference type="PROSITE" id="PS00905">
    <property type="entry name" value="GTP1_OBG"/>
    <property type="match status" value="1"/>
</dbReference>
<dbReference type="PROSITE" id="PS51883">
    <property type="entry name" value="OBG"/>
    <property type="match status" value="1"/>
</dbReference>
<feature type="chain" id="PRO_0000385803" description="GTPase Obg">
    <location>
        <begin position="1"/>
        <end position="350"/>
    </location>
</feature>
<feature type="domain" description="Obg" evidence="2">
    <location>
        <begin position="1"/>
        <end position="158"/>
    </location>
</feature>
<feature type="domain" description="OBG-type G" evidence="1">
    <location>
        <begin position="159"/>
        <end position="339"/>
    </location>
</feature>
<feature type="binding site" evidence="1">
    <location>
        <begin position="165"/>
        <end position="172"/>
    </location>
    <ligand>
        <name>GTP</name>
        <dbReference type="ChEBI" id="CHEBI:37565"/>
    </ligand>
</feature>
<feature type="binding site" evidence="1">
    <location>
        <position position="172"/>
    </location>
    <ligand>
        <name>Mg(2+)</name>
        <dbReference type="ChEBI" id="CHEBI:18420"/>
    </ligand>
</feature>
<feature type="binding site" evidence="1">
    <location>
        <begin position="190"/>
        <end position="194"/>
    </location>
    <ligand>
        <name>GTP</name>
        <dbReference type="ChEBI" id="CHEBI:37565"/>
    </ligand>
</feature>
<feature type="binding site" evidence="1">
    <location>
        <position position="192"/>
    </location>
    <ligand>
        <name>Mg(2+)</name>
        <dbReference type="ChEBI" id="CHEBI:18420"/>
    </ligand>
</feature>
<feature type="binding site" evidence="1">
    <location>
        <begin position="212"/>
        <end position="215"/>
    </location>
    <ligand>
        <name>GTP</name>
        <dbReference type="ChEBI" id="CHEBI:37565"/>
    </ligand>
</feature>
<feature type="binding site" evidence="1">
    <location>
        <begin position="280"/>
        <end position="283"/>
    </location>
    <ligand>
        <name>GTP</name>
        <dbReference type="ChEBI" id="CHEBI:37565"/>
    </ligand>
</feature>
<feature type="binding site" evidence="1">
    <location>
        <begin position="320"/>
        <end position="322"/>
    </location>
    <ligand>
        <name>GTP</name>
        <dbReference type="ChEBI" id="CHEBI:37565"/>
    </ligand>
</feature>
<comment type="function">
    <text evidence="1">An essential GTPase which binds GTP, GDP and possibly (p)ppGpp with moderate affinity, with high nucleotide exchange rates and a fairly low GTP hydrolysis rate. Plays a role in control of the cell cycle, stress response, ribosome biogenesis and in those bacteria that undergo differentiation, in morphogenesis control.</text>
</comment>
<comment type="cofactor">
    <cofactor evidence="1">
        <name>Mg(2+)</name>
        <dbReference type="ChEBI" id="CHEBI:18420"/>
    </cofactor>
</comment>
<comment type="subunit">
    <text evidence="1">Monomer.</text>
</comment>
<comment type="subcellular location">
    <subcellularLocation>
        <location evidence="1">Cytoplasm</location>
    </subcellularLocation>
</comment>
<comment type="similarity">
    <text evidence="1">Belongs to the TRAFAC class OBG-HflX-like GTPase superfamily. OBG GTPase family.</text>
</comment>
<protein>
    <recommendedName>
        <fullName evidence="1">GTPase Obg</fullName>
        <ecNumber evidence="1">3.6.5.-</ecNumber>
    </recommendedName>
    <alternativeName>
        <fullName evidence="1">GTP-binding protein Obg</fullName>
    </alternativeName>
</protein>
<evidence type="ECO:0000255" key="1">
    <source>
        <dbReference type="HAMAP-Rule" id="MF_01454"/>
    </source>
</evidence>
<evidence type="ECO:0000255" key="2">
    <source>
        <dbReference type="PROSITE-ProRule" id="PRU01231"/>
    </source>
</evidence>